<comment type="function">
    <text evidence="1">One of the primary rRNA binding proteins, it binds directly to 16S rRNA central domain where it helps coordinate assembly of the platform of the 30S subunit.</text>
</comment>
<comment type="subunit">
    <text evidence="1">Part of the 30S ribosomal subunit. Contacts proteins S5 and S12.</text>
</comment>
<comment type="similarity">
    <text evidence="1">Belongs to the universal ribosomal protein uS8 family.</text>
</comment>
<dbReference type="EMBL" id="AM420293">
    <property type="protein sequence ID" value="CAM05986.1"/>
    <property type="molecule type" value="Genomic_DNA"/>
</dbReference>
<dbReference type="RefSeq" id="WP_009948647.1">
    <property type="nucleotide sequence ID" value="NC_009142.1"/>
</dbReference>
<dbReference type="SMR" id="A4FPL1"/>
<dbReference type="STRING" id="405948.SACE_6822"/>
<dbReference type="KEGG" id="sen:SACE_6822"/>
<dbReference type="eggNOG" id="COG0096">
    <property type="taxonomic scope" value="Bacteria"/>
</dbReference>
<dbReference type="HOGENOM" id="CLU_098428_0_1_11"/>
<dbReference type="OrthoDB" id="9802617at2"/>
<dbReference type="Proteomes" id="UP000006728">
    <property type="component" value="Chromosome"/>
</dbReference>
<dbReference type="GO" id="GO:1990904">
    <property type="term" value="C:ribonucleoprotein complex"/>
    <property type="evidence" value="ECO:0007669"/>
    <property type="project" value="UniProtKB-KW"/>
</dbReference>
<dbReference type="GO" id="GO:0005840">
    <property type="term" value="C:ribosome"/>
    <property type="evidence" value="ECO:0007669"/>
    <property type="project" value="UniProtKB-KW"/>
</dbReference>
<dbReference type="GO" id="GO:0019843">
    <property type="term" value="F:rRNA binding"/>
    <property type="evidence" value="ECO:0007669"/>
    <property type="project" value="UniProtKB-UniRule"/>
</dbReference>
<dbReference type="GO" id="GO:0003735">
    <property type="term" value="F:structural constituent of ribosome"/>
    <property type="evidence" value="ECO:0007669"/>
    <property type="project" value="InterPro"/>
</dbReference>
<dbReference type="GO" id="GO:0006412">
    <property type="term" value="P:translation"/>
    <property type="evidence" value="ECO:0007669"/>
    <property type="project" value="UniProtKB-UniRule"/>
</dbReference>
<dbReference type="FunFam" id="3.30.1370.30:FF:000002">
    <property type="entry name" value="30S ribosomal protein S8"/>
    <property type="match status" value="1"/>
</dbReference>
<dbReference type="FunFam" id="3.30.1490.10:FF:000001">
    <property type="entry name" value="30S ribosomal protein S8"/>
    <property type="match status" value="1"/>
</dbReference>
<dbReference type="Gene3D" id="3.30.1370.30">
    <property type="match status" value="1"/>
</dbReference>
<dbReference type="Gene3D" id="3.30.1490.10">
    <property type="match status" value="1"/>
</dbReference>
<dbReference type="HAMAP" id="MF_01302_B">
    <property type="entry name" value="Ribosomal_uS8_B"/>
    <property type="match status" value="1"/>
</dbReference>
<dbReference type="InterPro" id="IPR000630">
    <property type="entry name" value="Ribosomal_uS8"/>
</dbReference>
<dbReference type="InterPro" id="IPR047863">
    <property type="entry name" value="Ribosomal_uS8_CS"/>
</dbReference>
<dbReference type="InterPro" id="IPR035987">
    <property type="entry name" value="Ribosomal_uS8_sf"/>
</dbReference>
<dbReference type="NCBIfam" id="NF001109">
    <property type="entry name" value="PRK00136.1"/>
    <property type="match status" value="1"/>
</dbReference>
<dbReference type="PANTHER" id="PTHR11758">
    <property type="entry name" value="40S RIBOSOMAL PROTEIN S15A"/>
    <property type="match status" value="1"/>
</dbReference>
<dbReference type="Pfam" id="PF00410">
    <property type="entry name" value="Ribosomal_S8"/>
    <property type="match status" value="1"/>
</dbReference>
<dbReference type="SUPFAM" id="SSF56047">
    <property type="entry name" value="Ribosomal protein S8"/>
    <property type="match status" value="1"/>
</dbReference>
<dbReference type="PROSITE" id="PS00053">
    <property type="entry name" value="RIBOSOMAL_S8"/>
    <property type="match status" value="1"/>
</dbReference>
<feature type="chain" id="PRO_0000290923" description="Small ribosomal subunit protein uS8">
    <location>
        <begin position="1"/>
        <end position="132"/>
    </location>
</feature>
<proteinExistence type="inferred from homology"/>
<gene>
    <name evidence="1" type="primary">rpsH</name>
    <name type="ordered locus">SACE_6822</name>
</gene>
<accession>A4FPL1</accession>
<name>RS8_SACEN</name>
<sequence length="132" mass="14383">MTMTDPIADMLTRLRNGNSAYHDEVVMPHSKLKANIAEILKREGYVSGYRTEQGEKGQNLVVELKYGPNRERSIAGLRRVSKPGLRVYAKSTNLPKVLGGLGIAIISTSGGLLTDRQAIKQGVGGEVLAYAW</sequence>
<evidence type="ECO:0000255" key="1">
    <source>
        <dbReference type="HAMAP-Rule" id="MF_01302"/>
    </source>
</evidence>
<evidence type="ECO:0000305" key="2"/>
<organism>
    <name type="scientific">Saccharopolyspora erythraea (strain ATCC 11635 / DSM 40517 / JCM 4748 / NBRC 13426 / NCIMB 8594 / NRRL 2338)</name>
    <dbReference type="NCBI Taxonomy" id="405948"/>
    <lineage>
        <taxon>Bacteria</taxon>
        <taxon>Bacillati</taxon>
        <taxon>Actinomycetota</taxon>
        <taxon>Actinomycetes</taxon>
        <taxon>Pseudonocardiales</taxon>
        <taxon>Pseudonocardiaceae</taxon>
        <taxon>Saccharopolyspora</taxon>
    </lineage>
</organism>
<keyword id="KW-1185">Reference proteome</keyword>
<keyword id="KW-0687">Ribonucleoprotein</keyword>
<keyword id="KW-0689">Ribosomal protein</keyword>
<keyword id="KW-0694">RNA-binding</keyword>
<keyword id="KW-0699">rRNA-binding</keyword>
<protein>
    <recommendedName>
        <fullName evidence="1">Small ribosomal subunit protein uS8</fullName>
    </recommendedName>
    <alternativeName>
        <fullName evidence="2">30S ribosomal protein S8</fullName>
    </alternativeName>
</protein>
<reference key="1">
    <citation type="journal article" date="2007" name="Nat. Biotechnol.">
        <title>Complete genome sequence of the erythromycin-producing bacterium Saccharopolyspora erythraea NRRL23338.</title>
        <authorList>
            <person name="Oliynyk M."/>
            <person name="Samborskyy M."/>
            <person name="Lester J.B."/>
            <person name="Mironenko T."/>
            <person name="Scott N."/>
            <person name="Dickens S."/>
            <person name="Haydock S.F."/>
            <person name="Leadlay P.F."/>
        </authorList>
    </citation>
    <scope>NUCLEOTIDE SEQUENCE [LARGE SCALE GENOMIC DNA]</scope>
    <source>
        <strain>ATCC 11635 / DSM 40517 / JCM 4748 / NBRC 13426 / NCIMB 8594 / NRRL 2338</strain>
    </source>
</reference>